<name>NDHI_ZEXSE</name>
<reference key="1">
    <citation type="submission" date="2003-01" db="EMBL/GenBank/DDBJ databases">
        <title>Chloroplast DNA phylogeny of tribe Heliantheae (Asteraceae).</title>
        <authorList>
            <person name="Panero J.L."/>
            <person name="Baldwin B.G."/>
            <person name="Schilling E.E."/>
            <person name="Clevinger J.A."/>
        </authorList>
    </citation>
    <scope>NUCLEOTIDE SEQUENCE [GENOMIC DNA]</scope>
</reference>
<keyword id="KW-0004">4Fe-4S</keyword>
<keyword id="KW-0150">Chloroplast</keyword>
<keyword id="KW-0408">Iron</keyword>
<keyword id="KW-0411">Iron-sulfur</keyword>
<keyword id="KW-0472">Membrane</keyword>
<keyword id="KW-0479">Metal-binding</keyword>
<keyword id="KW-0520">NAD</keyword>
<keyword id="KW-0521">NADP</keyword>
<keyword id="KW-0934">Plastid</keyword>
<keyword id="KW-0618">Plastoquinone</keyword>
<keyword id="KW-0874">Quinone</keyword>
<keyword id="KW-0677">Repeat</keyword>
<keyword id="KW-0793">Thylakoid</keyword>
<keyword id="KW-1278">Translocase</keyword>
<protein>
    <recommendedName>
        <fullName evidence="1">NAD(P)H-quinone oxidoreductase subunit I, chloroplastic</fullName>
        <ecNumber evidence="1">7.1.1.-</ecNumber>
    </recommendedName>
    <alternativeName>
        <fullName evidence="1">NAD(P)H dehydrogenase subunit I</fullName>
        <shortName evidence="1">NDH subunit I</shortName>
    </alternativeName>
    <alternativeName>
        <fullName evidence="1">NADH-plastoquinone oxidoreductase subunit I</fullName>
    </alternativeName>
</protein>
<accession>Q7I7Y4</accession>
<evidence type="ECO:0000255" key="1">
    <source>
        <dbReference type="HAMAP-Rule" id="MF_01351"/>
    </source>
</evidence>
<dbReference type="EC" id="7.1.1.-" evidence="1"/>
<dbReference type="EMBL" id="AF383873">
    <property type="protein sequence ID" value="AAO18347.1"/>
    <property type="molecule type" value="Genomic_DNA"/>
</dbReference>
<dbReference type="SMR" id="Q7I7Y4"/>
<dbReference type="GO" id="GO:0009535">
    <property type="term" value="C:chloroplast thylakoid membrane"/>
    <property type="evidence" value="ECO:0007669"/>
    <property type="project" value="UniProtKB-SubCell"/>
</dbReference>
<dbReference type="GO" id="GO:0051539">
    <property type="term" value="F:4 iron, 4 sulfur cluster binding"/>
    <property type="evidence" value="ECO:0007669"/>
    <property type="project" value="UniProtKB-KW"/>
</dbReference>
<dbReference type="GO" id="GO:0005506">
    <property type="term" value="F:iron ion binding"/>
    <property type="evidence" value="ECO:0007669"/>
    <property type="project" value="UniProtKB-UniRule"/>
</dbReference>
<dbReference type="GO" id="GO:0008137">
    <property type="term" value="F:NADH dehydrogenase (ubiquinone) activity"/>
    <property type="evidence" value="ECO:0007669"/>
    <property type="project" value="InterPro"/>
</dbReference>
<dbReference type="GO" id="GO:0048038">
    <property type="term" value="F:quinone binding"/>
    <property type="evidence" value="ECO:0007669"/>
    <property type="project" value="UniProtKB-KW"/>
</dbReference>
<dbReference type="GO" id="GO:0019684">
    <property type="term" value="P:photosynthesis, light reaction"/>
    <property type="evidence" value="ECO:0007669"/>
    <property type="project" value="UniProtKB-UniRule"/>
</dbReference>
<dbReference type="FunFam" id="3.30.70.3270:FF:000006">
    <property type="entry name" value="NAD(P)H-quinone oxidoreductase subunit I, chloroplastic"/>
    <property type="match status" value="1"/>
</dbReference>
<dbReference type="Gene3D" id="3.30.70.3270">
    <property type="match status" value="1"/>
</dbReference>
<dbReference type="HAMAP" id="MF_01351">
    <property type="entry name" value="NDH1_NuoI"/>
    <property type="match status" value="1"/>
</dbReference>
<dbReference type="InterPro" id="IPR017896">
    <property type="entry name" value="4Fe4S_Fe-S-bd"/>
</dbReference>
<dbReference type="InterPro" id="IPR017900">
    <property type="entry name" value="4Fe4S_Fe_S_CS"/>
</dbReference>
<dbReference type="InterPro" id="IPR010226">
    <property type="entry name" value="NADH_quinone_OxRdtase_chainI"/>
</dbReference>
<dbReference type="InterPro" id="IPR004497">
    <property type="entry name" value="NDHI"/>
</dbReference>
<dbReference type="NCBIfam" id="TIGR00403">
    <property type="entry name" value="ndhI"/>
    <property type="match status" value="1"/>
</dbReference>
<dbReference type="NCBIfam" id="TIGR01971">
    <property type="entry name" value="NuoI"/>
    <property type="match status" value="1"/>
</dbReference>
<dbReference type="NCBIfam" id="NF004537">
    <property type="entry name" value="PRK05888.1-3"/>
    <property type="match status" value="1"/>
</dbReference>
<dbReference type="PANTHER" id="PTHR47275">
    <property type="entry name" value="NAD(P)H-QUINONE OXIDOREDUCTASE SUBUNIT I, CHLOROPLASTIC"/>
    <property type="match status" value="1"/>
</dbReference>
<dbReference type="PANTHER" id="PTHR47275:SF1">
    <property type="entry name" value="NAD(P)H-QUINONE OXIDOREDUCTASE SUBUNIT I, CHLOROPLASTIC"/>
    <property type="match status" value="1"/>
</dbReference>
<dbReference type="Pfam" id="PF00037">
    <property type="entry name" value="Fer4"/>
    <property type="match status" value="2"/>
</dbReference>
<dbReference type="SUPFAM" id="SSF54862">
    <property type="entry name" value="4Fe-4S ferredoxins"/>
    <property type="match status" value="1"/>
</dbReference>
<dbReference type="PROSITE" id="PS00198">
    <property type="entry name" value="4FE4S_FER_1"/>
    <property type="match status" value="2"/>
</dbReference>
<dbReference type="PROSITE" id="PS51379">
    <property type="entry name" value="4FE4S_FER_2"/>
    <property type="match status" value="2"/>
</dbReference>
<geneLocation type="chloroplast"/>
<sequence>MFPMVTEFMNYGQQTIRAARYIGQGFMITLSHANRLPVTIQYPYEKLITSERFRGRIHFEFDKCIACEVCVRVCPIDLPVVDWKLETDIRKKRLLNYSIDFGICIFCGNCVEYCPTNCLSMTEEYELSTYDRHELNYNQIALGRLPMSIIDDYTIRTILNLPEIKT</sequence>
<organism>
    <name type="scientific">Zexmenia serrata</name>
    <dbReference type="NCBI Taxonomy" id="183104"/>
    <lineage>
        <taxon>Eukaryota</taxon>
        <taxon>Viridiplantae</taxon>
        <taxon>Streptophyta</taxon>
        <taxon>Embryophyta</taxon>
        <taxon>Tracheophyta</taxon>
        <taxon>Spermatophyta</taxon>
        <taxon>Magnoliopsida</taxon>
        <taxon>eudicotyledons</taxon>
        <taxon>Gunneridae</taxon>
        <taxon>Pentapetalae</taxon>
        <taxon>asterids</taxon>
        <taxon>campanulids</taxon>
        <taxon>Asterales</taxon>
        <taxon>Asteraceae</taxon>
        <taxon>Asteroideae</taxon>
        <taxon>Heliantheae alliance</taxon>
        <taxon>Heliantheae</taxon>
        <taxon>Zexmenia</taxon>
    </lineage>
</organism>
<feature type="chain" id="PRO_0000250869" description="NAD(P)H-quinone oxidoreductase subunit I, chloroplastic">
    <location>
        <begin position="1"/>
        <end position="166"/>
    </location>
</feature>
<feature type="domain" description="4Fe-4S ferredoxin-type 1" evidence="1">
    <location>
        <begin position="55"/>
        <end position="84"/>
    </location>
</feature>
<feature type="domain" description="4Fe-4S ferredoxin-type 2" evidence="1">
    <location>
        <begin position="95"/>
        <end position="124"/>
    </location>
</feature>
<feature type="binding site" evidence="1">
    <location>
        <position position="64"/>
    </location>
    <ligand>
        <name>[4Fe-4S] cluster</name>
        <dbReference type="ChEBI" id="CHEBI:49883"/>
        <label>1</label>
    </ligand>
</feature>
<feature type="binding site" evidence="1">
    <location>
        <position position="67"/>
    </location>
    <ligand>
        <name>[4Fe-4S] cluster</name>
        <dbReference type="ChEBI" id="CHEBI:49883"/>
        <label>1</label>
    </ligand>
</feature>
<feature type="binding site" evidence="1">
    <location>
        <position position="70"/>
    </location>
    <ligand>
        <name>[4Fe-4S] cluster</name>
        <dbReference type="ChEBI" id="CHEBI:49883"/>
        <label>1</label>
    </ligand>
</feature>
<feature type="binding site" evidence="1">
    <location>
        <position position="74"/>
    </location>
    <ligand>
        <name>[4Fe-4S] cluster</name>
        <dbReference type="ChEBI" id="CHEBI:49883"/>
        <label>2</label>
    </ligand>
</feature>
<feature type="binding site" evidence="1">
    <location>
        <position position="104"/>
    </location>
    <ligand>
        <name>[4Fe-4S] cluster</name>
        <dbReference type="ChEBI" id="CHEBI:49883"/>
        <label>2</label>
    </ligand>
</feature>
<feature type="binding site" evidence="1">
    <location>
        <position position="107"/>
    </location>
    <ligand>
        <name>[4Fe-4S] cluster</name>
        <dbReference type="ChEBI" id="CHEBI:49883"/>
        <label>2</label>
    </ligand>
</feature>
<feature type="binding site" evidence="1">
    <location>
        <position position="110"/>
    </location>
    <ligand>
        <name>[4Fe-4S] cluster</name>
        <dbReference type="ChEBI" id="CHEBI:49883"/>
        <label>2</label>
    </ligand>
</feature>
<feature type="binding site" evidence="1">
    <location>
        <position position="114"/>
    </location>
    <ligand>
        <name>[4Fe-4S] cluster</name>
        <dbReference type="ChEBI" id="CHEBI:49883"/>
        <label>1</label>
    </ligand>
</feature>
<proteinExistence type="inferred from homology"/>
<comment type="function">
    <text evidence="1">NDH shuttles electrons from NAD(P)H:plastoquinone, via FMN and iron-sulfur (Fe-S) centers, to quinones in the photosynthetic chain and possibly in a chloroplast respiratory chain. The immediate electron acceptor for the enzyme in this species is believed to be plastoquinone. Couples the redox reaction to proton translocation, and thus conserves the redox energy in a proton gradient.</text>
</comment>
<comment type="catalytic activity">
    <reaction evidence="1">
        <text>a plastoquinone + NADH + (n+1) H(+)(in) = a plastoquinol + NAD(+) + n H(+)(out)</text>
        <dbReference type="Rhea" id="RHEA:42608"/>
        <dbReference type="Rhea" id="RHEA-COMP:9561"/>
        <dbReference type="Rhea" id="RHEA-COMP:9562"/>
        <dbReference type="ChEBI" id="CHEBI:15378"/>
        <dbReference type="ChEBI" id="CHEBI:17757"/>
        <dbReference type="ChEBI" id="CHEBI:57540"/>
        <dbReference type="ChEBI" id="CHEBI:57945"/>
        <dbReference type="ChEBI" id="CHEBI:62192"/>
    </reaction>
</comment>
<comment type="catalytic activity">
    <reaction evidence="1">
        <text>a plastoquinone + NADPH + (n+1) H(+)(in) = a plastoquinol + NADP(+) + n H(+)(out)</text>
        <dbReference type="Rhea" id="RHEA:42612"/>
        <dbReference type="Rhea" id="RHEA-COMP:9561"/>
        <dbReference type="Rhea" id="RHEA-COMP:9562"/>
        <dbReference type="ChEBI" id="CHEBI:15378"/>
        <dbReference type="ChEBI" id="CHEBI:17757"/>
        <dbReference type="ChEBI" id="CHEBI:57783"/>
        <dbReference type="ChEBI" id="CHEBI:58349"/>
        <dbReference type="ChEBI" id="CHEBI:62192"/>
    </reaction>
</comment>
<comment type="cofactor">
    <cofactor evidence="1">
        <name>[4Fe-4S] cluster</name>
        <dbReference type="ChEBI" id="CHEBI:49883"/>
    </cofactor>
    <text evidence="1">Binds 2 [4Fe-4S] clusters per subunit.</text>
</comment>
<comment type="subunit">
    <text evidence="1">NDH is composed of at least 16 different subunits, 5 of which are encoded in the nucleus.</text>
</comment>
<comment type="subcellular location">
    <subcellularLocation>
        <location evidence="1">Plastid</location>
        <location evidence="1">Chloroplast thylakoid membrane</location>
        <topology evidence="1">Peripheral membrane protein</topology>
    </subcellularLocation>
</comment>
<comment type="similarity">
    <text evidence="1">Belongs to the complex I 23 kDa subunit family.</text>
</comment>
<gene>
    <name evidence="1" type="primary">ndhI</name>
</gene>